<reference key="1">
    <citation type="journal article" date="2011" name="J. Bacteriol.">
        <title>Comparative genomics of 28 Salmonella enterica isolates: evidence for CRISPR-mediated adaptive sublineage evolution.</title>
        <authorList>
            <person name="Fricke W.F."/>
            <person name="Mammel M.K."/>
            <person name="McDermott P.F."/>
            <person name="Tartera C."/>
            <person name="White D.G."/>
            <person name="Leclerc J.E."/>
            <person name="Ravel J."/>
            <person name="Cebula T.A."/>
        </authorList>
    </citation>
    <scope>NUCLEOTIDE SEQUENCE [LARGE SCALE GENOMIC DNA]</scope>
    <source>
        <strain>SL476</strain>
    </source>
</reference>
<name>THIK_SALHS</name>
<comment type="function">
    <text evidence="1">Catalyzes the ATP-dependent phosphorylation of thiamine to thiamine phosphate. Is involved in thiamine salvage.</text>
</comment>
<comment type="catalytic activity">
    <reaction evidence="1">
        <text>thiamine + ATP = thiamine phosphate + ADP + H(+)</text>
        <dbReference type="Rhea" id="RHEA:12012"/>
        <dbReference type="ChEBI" id="CHEBI:15378"/>
        <dbReference type="ChEBI" id="CHEBI:18385"/>
        <dbReference type="ChEBI" id="CHEBI:30616"/>
        <dbReference type="ChEBI" id="CHEBI:37575"/>
        <dbReference type="ChEBI" id="CHEBI:456216"/>
        <dbReference type="EC" id="2.7.1.89"/>
    </reaction>
    <physiologicalReaction direction="left-to-right" evidence="1">
        <dbReference type="Rhea" id="RHEA:12013"/>
    </physiologicalReaction>
</comment>
<comment type="pathway">
    <text evidence="1">Cofactor biosynthesis; thiamine diphosphate biosynthesis; thiamine phosphate from thiamine: step 1/1.</text>
</comment>
<comment type="similarity">
    <text evidence="1">Belongs to the thiamine kinase family.</text>
</comment>
<proteinExistence type="inferred from homology"/>
<protein>
    <recommendedName>
        <fullName evidence="1">Thiamine kinase</fullName>
        <ecNumber evidence="1">2.7.1.89</ecNumber>
    </recommendedName>
</protein>
<accession>B4TFI3</accession>
<evidence type="ECO:0000255" key="1">
    <source>
        <dbReference type="HAMAP-Rule" id="MF_01604"/>
    </source>
</evidence>
<organism>
    <name type="scientific">Salmonella heidelberg (strain SL476)</name>
    <dbReference type="NCBI Taxonomy" id="454169"/>
    <lineage>
        <taxon>Bacteria</taxon>
        <taxon>Pseudomonadati</taxon>
        <taxon>Pseudomonadota</taxon>
        <taxon>Gammaproteobacteria</taxon>
        <taxon>Enterobacterales</taxon>
        <taxon>Enterobacteriaceae</taxon>
        <taxon>Salmonella</taxon>
    </lineage>
</organism>
<keyword id="KW-0067">ATP-binding</keyword>
<keyword id="KW-0418">Kinase</keyword>
<keyword id="KW-0547">Nucleotide-binding</keyword>
<keyword id="KW-0808">Transferase</keyword>
<gene>
    <name evidence="1" type="primary">thiK</name>
    <name type="ordered locus">SeHA_C1322</name>
</gene>
<feature type="chain" id="PRO_1000198098" description="Thiamine kinase">
    <location>
        <begin position="1"/>
        <end position="274"/>
    </location>
</feature>
<sequence>MRSNNNNPLTRDEILSRYFPQYRPAVAASQGLSGGSCIIAHDTHRVVLRRHHDPDAPPAHFLRHYRALSQLPASLAPRALFYTPGWMAVEYLHGVVNSALPDADELAALLYHLHQQPRFGWRIALSPLLAQYWSCCDPARRTPFWLRRLKQLQKNGEPRPLRLAPLHMDVHGDNIVLTSAGLRLIDWEYAGDGDIALELAAVWVEDERQHRQLADAYAARARIDARQLWRQIRLWHPWVIMLKAGWFEYRWRQTGEQQFIRLADETWRQLRMKG</sequence>
<dbReference type="EC" id="2.7.1.89" evidence="1"/>
<dbReference type="EMBL" id="CP001120">
    <property type="protein sequence ID" value="ACF69459.1"/>
    <property type="molecule type" value="Genomic_DNA"/>
</dbReference>
<dbReference type="RefSeq" id="WP_001257333.1">
    <property type="nucleotide sequence ID" value="NC_011083.1"/>
</dbReference>
<dbReference type="SMR" id="B4TFI3"/>
<dbReference type="KEGG" id="seh:SeHA_C1322"/>
<dbReference type="HOGENOM" id="CLU_055115_2_1_6"/>
<dbReference type="UniPathway" id="UPA00060">
    <property type="reaction ID" value="UER00596"/>
</dbReference>
<dbReference type="Proteomes" id="UP000001866">
    <property type="component" value="Chromosome"/>
</dbReference>
<dbReference type="GO" id="GO:0005524">
    <property type="term" value="F:ATP binding"/>
    <property type="evidence" value="ECO:0007669"/>
    <property type="project" value="UniProtKB-KW"/>
</dbReference>
<dbReference type="GO" id="GO:0019165">
    <property type="term" value="F:thiamine kinase activity"/>
    <property type="evidence" value="ECO:0007669"/>
    <property type="project" value="UniProtKB-UniRule"/>
</dbReference>
<dbReference type="GO" id="GO:0009229">
    <property type="term" value="P:thiamine diphosphate biosynthetic process"/>
    <property type="evidence" value="ECO:0007669"/>
    <property type="project" value="UniProtKB-UniRule"/>
</dbReference>
<dbReference type="GO" id="GO:0006772">
    <property type="term" value="P:thiamine metabolic process"/>
    <property type="evidence" value="ECO:0007669"/>
    <property type="project" value="InterPro"/>
</dbReference>
<dbReference type="Gene3D" id="3.90.1200.10">
    <property type="match status" value="1"/>
</dbReference>
<dbReference type="HAMAP" id="MF_01604">
    <property type="entry name" value="Thiamine_kinase"/>
    <property type="match status" value="1"/>
</dbReference>
<dbReference type="InterPro" id="IPR002575">
    <property type="entry name" value="Aminoglycoside_PTrfase"/>
</dbReference>
<dbReference type="InterPro" id="IPR011009">
    <property type="entry name" value="Kinase-like_dom_sf"/>
</dbReference>
<dbReference type="InterPro" id="IPR014093">
    <property type="entry name" value="Thiamine_kinase"/>
</dbReference>
<dbReference type="NCBIfam" id="NF007620">
    <property type="entry name" value="PRK10271.1"/>
    <property type="match status" value="1"/>
</dbReference>
<dbReference type="NCBIfam" id="TIGR02721">
    <property type="entry name" value="ycfN_thiK"/>
    <property type="match status" value="1"/>
</dbReference>
<dbReference type="Pfam" id="PF01636">
    <property type="entry name" value="APH"/>
    <property type="match status" value="1"/>
</dbReference>
<dbReference type="SUPFAM" id="SSF56112">
    <property type="entry name" value="Protein kinase-like (PK-like)"/>
    <property type="match status" value="1"/>
</dbReference>